<gene>
    <name evidence="1" type="primary">coaA</name>
    <name type="ordered locus">RPC_0312</name>
</gene>
<sequence length="317" mass="36392">MDARADQIYNPYRVFTRAQWAKLRDDTPMTLNATEIAALRSMYDRLDLKEVEEIYLPLSRLLSIYVAATQQLYFAQRRFLGIVDRKMPYIIGVAGSVAVGKSTTARVLQALLARWSPRPKVDLITTDGFLYSNAMLERQGMMQKKGFPESYDLPRLLAFLSDIKAGRRRVRAPIYSHLTYDIVPNEYVTVDRPDILIVEGVNVLQTGRLPRDGKAVPVVSDFFDFSVYIDADEPVLREWYVQRFLALRDTAFHDPRSYFHRYAPLSDEEATATALAIWERTNLANLEDNILPTRPRATLIMKKGTDHVVETVALRRL</sequence>
<proteinExistence type="inferred from homology"/>
<name>COAA_RHOPB</name>
<organism>
    <name type="scientific">Rhodopseudomonas palustris (strain BisB18)</name>
    <dbReference type="NCBI Taxonomy" id="316056"/>
    <lineage>
        <taxon>Bacteria</taxon>
        <taxon>Pseudomonadati</taxon>
        <taxon>Pseudomonadota</taxon>
        <taxon>Alphaproteobacteria</taxon>
        <taxon>Hyphomicrobiales</taxon>
        <taxon>Nitrobacteraceae</taxon>
        <taxon>Rhodopseudomonas</taxon>
    </lineage>
</organism>
<protein>
    <recommendedName>
        <fullName evidence="1">Pantothenate kinase</fullName>
        <ecNumber evidence="1">2.7.1.33</ecNumber>
    </recommendedName>
    <alternativeName>
        <fullName evidence="1">Pantothenic acid kinase</fullName>
    </alternativeName>
</protein>
<evidence type="ECO:0000255" key="1">
    <source>
        <dbReference type="HAMAP-Rule" id="MF_00215"/>
    </source>
</evidence>
<dbReference type="EC" id="2.7.1.33" evidence="1"/>
<dbReference type="EMBL" id="CP000301">
    <property type="protein sequence ID" value="ABD85887.1"/>
    <property type="molecule type" value="Genomic_DNA"/>
</dbReference>
<dbReference type="SMR" id="Q21CJ9"/>
<dbReference type="STRING" id="316056.RPC_0312"/>
<dbReference type="KEGG" id="rpc:RPC_0312"/>
<dbReference type="eggNOG" id="COG1072">
    <property type="taxonomic scope" value="Bacteria"/>
</dbReference>
<dbReference type="HOGENOM" id="CLU_053818_1_1_5"/>
<dbReference type="OrthoDB" id="1550976at2"/>
<dbReference type="UniPathway" id="UPA00241">
    <property type="reaction ID" value="UER00352"/>
</dbReference>
<dbReference type="GO" id="GO:0005737">
    <property type="term" value="C:cytoplasm"/>
    <property type="evidence" value="ECO:0007669"/>
    <property type="project" value="UniProtKB-SubCell"/>
</dbReference>
<dbReference type="GO" id="GO:0005524">
    <property type="term" value="F:ATP binding"/>
    <property type="evidence" value="ECO:0007669"/>
    <property type="project" value="UniProtKB-UniRule"/>
</dbReference>
<dbReference type="GO" id="GO:0004594">
    <property type="term" value="F:pantothenate kinase activity"/>
    <property type="evidence" value="ECO:0007669"/>
    <property type="project" value="UniProtKB-UniRule"/>
</dbReference>
<dbReference type="GO" id="GO:0015937">
    <property type="term" value="P:coenzyme A biosynthetic process"/>
    <property type="evidence" value="ECO:0007669"/>
    <property type="project" value="UniProtKB-UniRule"/>
</dbReference>
<dbReference type="CDD" id="cd02025">
    <property type="entry name" value="PanK"/>
    <property type="match status" value="1"/>
</dbReference>
<dbReference type="Gene3D" id="3.40.50.300">
    <property type="entry name" value="P-loop containing nucleotide triphosphate hydrolases"/>
    <property type="match status" value="1"/>
</dbReference>
<dbReference type="HAMAP" id="MF_00215">
    <property type="entry name" value="Pantothen_kinase_1"/>
    <property type="match status" value="1"/>
</dbReference>
<dbReference type="InterPro" id="IPR027417">
    <property type="entry name" value="P-loop_NTPase"/>
</dbReference>
<dbReference type="InterPro" id="IPR004566">
    <property type="entry name" value="PanK"/>
</dbReference>
<dbReference type="InterPro" id="IPR006083">
    <property type="entry name" value="PRK/URK"/>
</dbReference>
<dbReference type="NCBIfam" id="TIGR00554">
    <property type="entry name" value="panK_bact"/>
    <property type="match status" value="1"/>
</dbReference>
<dbReference type="PANTHER" id="PTHR10285">
    <property type="entry name" value="URIDINE KINASE"/>
    <property type="match status" value="1"/>
</dbReference>
<dbReference type="Pfam" id="PF00485">
    <property type="entry name" value="PRK"/>
    <property type="match status" value="1"/>
</dbReference>
<dbReference type="PIRSF" id="PIRSF000545">
    <property type="entry name" value="Pantothenate_kin"/>
    <property type="match status" value="1"/>
</dbReference>
<dbReference type="SUPFAM" id="SSF52540">
    <property type="entry name" value="P-loop containing nucleoside triphosphate hydrolases"/>
    <property type="match status" value="1"/>
</dbReference>
<feature type="chain" id="PRO_1000043244" description="Pantothenate kinase">
    <location>
        <begin position="1"/>
        <end position="317"/>
    </location>
</feature>
<feature type="binding site" evidence="1">
    <location>
        <begin position="95"/>
        <end position="102"/>
    </location>
    <ligand>
        <name>ATP</name>
        <dbReference type="ChEBI" id="CHEBI:30616"/>
    </ligand>
</feature>
<keyword id="KW-0067">ATP-binding</keyword>
<keyword id="KW-0173">Coenzyme A biosynthesis</keyword>
<keyword id="KW-0963">Cytoplasm</keyword>
<keyword id="KW-0418">Kinase</keyword>
<keyword id="KW-0547">Nucleotide-binding</keyword>
<keyword id="KW-0808">Transferase</keyword>
<comment type="catalytic activity">
    <reaction evidence="1">
        <text>(R)-pantothenate + ATP = (R)-4'-phosphopantothenate + ADP + H(+)</text>
        <dbReference type="Rhea" id="RHEA:16373"/>
        <dbReference type="ChEBI" id="CHEBI:10986"/>
        <dbReference type="ChEBI" id="CHEBI:15378"/>
        <dbReference type="ChEBI" id="CHEBI:29032"/>
        <dbReference type="ChEBI" id="CHEBI:30616"/>
        <dbReference type="ChEBI" id="CHEBI:456216"/>
        <dbReference type="EC" id="2.7.1.33"/>
    </reaction>
</comment>
<comment type="pathway">
    <text evidence="1">Cofactor biosynthesis; coenzyme A biosynthesis; CoA from (R)-pantothenate: step 1/5.</text>
</comment>
<comment type="subcellular location">
    <subcellularLocation>
        <location evidence="1">Cytoplasm</location>
    </subcellularLocation>
</comment>
<comment type="similarity">
    <text evidence="1">Belongs to the prokaryotic pantothenate kinase family.</text>
</comment>
<accession>Q21CJ9</accession>
<reference key="1">
    <citation type="submission" date="2006-03" db="EMBL/GenBank/DDBJ databases">
        <title>Complete sequence of Rhodopseudomonas palustris BisB18.</title>
        <authorList>
            <consortium name="US DOE Joint Genome Institute"/>
            <person name="Copeland A."/>
            <person name="Lucas S."/>
            <person name="Lapidus A."/>
            <person name="Barry K."/>
            <person name="Detter J.C."/>
            <person name="Glavina del Rio T."/>
            <person name="Hammon N."/>
            <person name="Israni S."/>
            <person name="Dalin E."/>
            <person name="Tice H."/>
            <person name="Pitluck S."/>
            <person name="Chain P."/>
            <person name="Malfatti S."/>
            <person name="Shin M."/>
            <person name="Vergez L."/>
            <person name="Schmutz J."/>
            <person name="Larimer F."/>
            <person name="Land M."/>
            <person name="Hauser L."/>
            <person name="Pelletier D.A."/>
            <person name="Kyrpides N."/>
            <person name="Anderson I."/>
            <person name="Oda Y."/>
            <person name="Harwood C.S."/>
            <person name="Richardson P."/>
        </authorList>
    </citation>
    <scope>NUCLEOTIDE SEQUENCE [LARGE SCALE GENOMIC DNA]</scope>
    <source>
        <strain>BisB18</strain>
    </source>
</reference>